<organism>
    <name type="scientific">Methanoculleus marisnigri (strain ATCC 35101 / DSM 1498 / JR1)</name>
    <dbReference type="NCBI Taxonomy" id="368407"/>
    <lineage>
        <taxon>Archaea</taxon>
        <taxon>Methanobacteriati</taxon>
        <taxon>Methanobacteriota</taxon>
        <taxon>Stenosarchaea group</taxon>
        <taxon>Methanomicrobia</taxon>
        <taxon>Methanomicrobiales</taxon>
        <taxon>Methanomicrobiaceae</taxon>
        <taxon>Methanoculleus</taxon>
    </lineage>
</organism>
<protein>
    <recommendedName>
        <fullName evidence="1">tRNA pseudouridine synthase A</fullName>
        <ecNumber evidence="1">5.4.99.12</ecNumber>
    </recommendedName>
    <alternativeName>
        <fullName evidence="1">tRNA pseudouridine(38-40) synthase</fullName>
    </alternativeName>
    <alternativeName>
        <fullName evidence="1">tRNA pseudouridylate synthase I</fullName>
    </alternativeName>
    <alternativeName>
        <fullName evidence="1">tRNA-uridine isomerase I</fullName>
    </alternativeName>
</protein>
<proteinExistence type="inferred from homology"/>
<feature type="chain" id="PRO_1000017115" description="tRNA pseudouridine synthase A">
    <location>
        <begin position="1"/>
        <end position="270"/>
    </location>
</feature>
<feature type="active site" description="Nucleophile" evidence="1">
    <location>
        <position position="55"/>
    </location>
</feature>
<feature type="binding site" evidence="1">
    <location>
        <position position="110"/>
    </location>
    <ligand>
        <name>substrate</name>
    </ligand>
</feature>
<reference key="1">
    <citation type="journal article" date="2009" name="Stand. Genomic Sci.">
        <title>Complete genome sequence of Methanoculleus marisnigri Romesser et al. 1981 type strain JR1.</title>
        <authorList>
            <person name="Anderson I.J."/>
            <person name="Sieprawska-Lupa M."/>
            <person name="Lapidus A."/>
            <person name="Nolan M."/>
            <person name="Copeland A."/>
            <person name="Glavina Del Rio T."/>
            <person name="Tice H."/>
            <person name="Dalin E."/>
            <person name="Barry K."/>
            <person name="Saunders E."/>
            <person name="Han C."/>
            <person name="Brettin T."/>
            <person name="Detter J.C."/>
            <person name="Bruce D."/>
            <person name="Mikhailova N."/>
            <person name="Pitluck S."/>
            <person name="Hauser L."/>
            <person name="Land M."/>
            <person name="Lucas S."/>
            <person name="Richardson P."/>
            <person name="Whitman W.B."/>
            <person name="Kyrpides N.C."/>
        </authorList>
    </citation>
    <scope>NUCLEOTIDE SEQUENCE [LARGE SCALE GENOMIC DNA]</scope>
    <source>
        <strain>ATCC 35101 / DSM 1498 / JR1</strain>
    </source>
</reference>
<gene>
    <name evidence="1" type="primary">truA</name>
    <name type="ordered locus">Memar_2301</name>
</gene>
<sequence length="270" mass="30287">MNLAFRFSYFGDRFFGSQMQPDLCTVEGEFIGACRLLRLFDDWREANFATAGRTDRGVHARSQVCSFLTDKPERAIEALNRVLPADIWCTGWAEAPDGFHPRYSAVSRTYRYYFSAPGDAAAMHEAAQEFLGRHDFSAFARAGDRNPERRILASRVFIDGEFAVFEVTGESFLWNMVRCMATMLGRVGRGEAEAGEIARLLTGPVERRVAAAPPEGLILWDIDYGIPFTPLPIDAGSSRHLGDRHRYHVLMAKISAHLAQDHRQPDTPGI</sequence>
<name>TRUA_METMJ</name>
<evidence type="ECO:0000255" key="1">
    <source>
        <dbReference type="HAMAP-Rule" id="MF_00171"/>
    </source>
</evidence>
<dbReference type="EC" id="5.4.99.12" evidence="1"/>
<dbReference type="EMBL" id="CP000562">
    <property type="protein sequence ID" value="ABN58224.1"/>
    <property type="molecule type" value="Genomic_DNA"/>
</dbReference>
<dbReference type="RefSeq" id="WP_011845133.1">
    <property type="nucleotide sequence ID" value="NC_009051.1"/>
</dbReference>
<dbReference type="SMR" id="A3CXX4"/>
<dbReference type="STRING" id="368407.Memar_2301"/>
<dbReference type="GeneID" id="4848144"/>
<dbReference type="GeneID" id="76730384"/>
<dbReference type="KEGG" id="mem:Memar_2301"/>
<dbReference type="eggNOG" id="arCOG04449">
    <property type="taxonomic scope" value="Archaea"/>
</dbReference>
<dbReference type="HOGENOM" id="CLU_014673_4_2_2"/>
<dbReference type="OrthoDB" id="25720at2157"/>
<dbReference type="Proteomes" id="UP000002146">
    <property type="component" value="Chromosome"/>
</dbReference>
<dbReference type="GO" id="GO:0003723">
    <property type="term" value="F:RNA binding"/>
    <property type="evidence" value="ECO:0007669"/>
    <property type="project" value="InterPro"/>
</dbReference>
<dbReference type="GO" id="GO:0160147">
    <property type="term" value="F:tRNA pseudouridine(38-40) synthase activity"/>
    <property type="evidence" value="ECO:0007669"/>
    <property type="project" value="UniProtKB-EC"/>
</dbReference>
<dbReference type="GO" id="GO:0031119">
    <property type="term" value="P:tRNA pseudouridine synthesis"/>
    <property type="evidence" value="ECO:0007669"/>
    <property type="project" value="UniProtKB-UniRule"/>
</dbReference>
<dbReference type="Gene3D" id="3.30.70.660">
    <property type="entry name" value="Pseudouridine synthase I, catalytic domain, C-terminal subdomain"/>
    <property type="match status" value="1"/>
</dbReference>
<dbReference type="Gene3D" id="3.30.70.580">
    <property type="entry name" value="Pseudouridine synthase I, catalytic domain, N-terminal subdomain"/>
    <property type="match status" value="1"/>
</dbReference>
<dbReference type="HAMAP" id="MF_00171">
    <property type="entry name" value="TruA"/>
    <property type="match status" value="1"/>
</dbReference>
<dbReference type="InterPro" id="IPR020103">
    <property type="entry name" value="PsdUridine_synth_cat_dom_sf"/>
</dbReference>
<dbReference type="InterPro" id="IPR001406">
    <property type="entry name" value="PsdUridine_synth_TruA"/>
</dbReference>
<dbReference type="InterPro" id="IPR020097">
    <property type="entry name" value="PsdUridine_synth_TruA_a/b_dom"/>
</dbReference>
<dbReference type="InterPro" id="IPR020095">
    <property type="entry name" value="PsdUridine_synth_TruA_C"/>
</dbReference>
<dbReference type="InterPro" id="IPR020094">
    <property type="entry name" value="TruA/RsuA/RluB/E/F_N"/>
</dbReference>
<dbReference type="NCBIfam" id="TIGR00071">
    <property type="entry name" value="hisT_truA"/>
    <property type="match status" value="1"/>
</dbReference>
<dbReference type="PANTHER" id="PTHR11142">
    <property type="entry name" value="PSEUDOURIDYLATE SYNTHASE"/>
    <property type="match status" value="1"/>
</dbReference>
<dbReference type="PANTHER" id="PTHR11142:SF0">
    <property type="entry name" value="TRNA PSEUDOURIDINE SYNTHASE-LIKE 1"/>
    <property type="match status" value="1"/>
</dbReference>
<dbReference type="Pfam" id="PF01416">
    <property type="entry name" value="PseudoU_synth_1"/>
    <property type="match status" value="1"/>
</dbReference>
<dbReference type="PIRSF" id="PIRSF001430">
    <property type="entry name" value="tRNA_psdUrid_synth"/>
    <property type="match status" value="1"/>
</dbReference>
<dbReference type="SUPFAM" id="SSF55120">
    <property type="entry name" value="Pseudouridine synthase"/>
    <property type="match status" value="1"/>
</dbReference>
<accession>A3CXX4</accession>
<keyword id="KW-0413">Isomerase</keyword>
<keyword id="KW-0819">tRNA processing</keyword>
<comment type="function">
    <text evidence="1">Formation of pseudouridine at positions 38, 39 and 40 in the anticodon stem and loop of transfer RNAs.</text>
</comment>
<comment type="catalytic activity">
    <reaction evidence="1">
        <text>uridine(38/39/40) in tRNA = pseudouridine(38/39/40) in tRNA</text>
        <dbReference type="Rhea" id="RHEA:22376"/>
        <dbReference type="Rhea" id="RHEA-COMP:10085"/>
        <dbReference type="Rhea" id="RHEA-COMP:10087"/>
        <dbReference type="ChEBI" id="CHEBI:65314"/>
        <dbReference type="ChEBI" id="CHEBI:65315"/>
        <dbReference type="EC" id="5.4.99.12"/>
    </reaction>
</comment>
<comment type="similarity">
    <text evidence="1">Belongs to the tRNA pseudouridine synthase TruA family.</text>
</comment>